<organism>
    <name type="scientific">Streptococcus pyogenes serotype M28 (strain MGAS6180)</name>
    <dbReference type="NCBI Taxonomy" id="319701"/>
    <lineage>
        <taxon>Bacteria</taxon>
        <taxon>Bacillati</taxon>
        <taxon>Bacillota</taxon>
        <taxon>Bacilli</taxon>
        <taxon>Lactobacillales</taxon>
        <taxon>Streptococcaceae</taxon>
        <taxon>Streptococcus</taxon>
    </lineage>
</organism>
<proteinExistence type="inferred from homology"/>
<sequence>MEYFNVGKIVNTQGLQGEMRVLSVSDFAEERFKKGSQLALFDDKDQFVQEVTIVSHRKQKHFDIIKLKDMYHINAIEKYKGYTLKVSKANQGDLQEGEFYYHQIIGMAVYEKDRLIGYVKEILQPGANDVWVVKRQGKRDLLLPYIPPVVLNVDVPNKRVDVELMEGLDDED</sequence>
<feature type="chain" id="PRO_0000244175" description="Ribosome maturation factor RimM">
    <location>
        <begin position="1"/>
        <end position="172"/>
    </location>
</feature>
<feature type="domain" description="PRC barrel" evidence="1">
    <location>
        <begin position="96"/>
        <end position="168"/>
    </location>
</feature>
<gene>
    <name evidence="1" type="primary">rimM</name>
    <name type="ordered locus">M28_Spy0636</name>
</gene>
<reference key="1">
    <citation type="journal article" date="2005" name="J. Infect. Dis.">
        <title>Genome sequence of a serotype M28 strain of group A Streptococcus: potential new insights into puerperal sepsis and bacterial disease specificity.</title>
        <authorList>
            <person name="Green N.M."/>
            <person name="Zhang S."/>
            <person name="Porcella S.F."/>
            <person name="Nagiec M.J."/>
            <person name="Barbian K.D."/>
            <person name="Beres S.B."/>
            <person name="Lefebvre R.B."/>
            <person name="Musser J.M."/>
        </authorList>
    </citation>
    <scope>NUCLEOTIDE SEQUENCE [LARGE SCALE GENOMIC DNA]</scope>
    <source>
        <strain>MGAS6180</strain>
    </source>
</reference>
<accession>Q48U56</accession>
<evidence type="ECO:0000255" key="1">
    <source>
        <dbReference type="HAMAP-Rule" id="MF_00014"/>
    </source>
</evidence>
<keyword id="KW-0143">Chaperone</keyword>
<keyword id="KW-0963">Cytoplasm</keyword>
<keyword id="KW-0690">Ribosome biogenesis</keyword>
<keyword id="KW-0698">rRNA processing</keyword>
<protein>
    <recommendedName>
        <fullName evidence="1">Ribosome maturation factor RimM</fullName>
    </recommendedName>
</protein>
<name>RIMM_STRPM</name>
<dbReference type="EMBL" id="CP000056">
    <property type="protein sequence ID" value="AAX71750.1"/>
    <property type="molecule type" value="Genomic_DNA"/>
</dbReference>
<dbReference type="RefSeq" id="WP_011284687.1">
    <property type="nucleotide sequence ID" value="NC_007296.2"/>
</dbReference>
<dbReference type="SMR" id="Q48U56"/>
<dbReference type="KEGG" id="spb:M28_Spy0636"/>
<dbReference type="HOGENOM" id="CLU_077636_3_1_9"/>
<dbReference type="GO" id="GO:0005737">
    <property type="term" value="C:cytoplasm"/>
    <property type="evidence" value="ECO:0007669"/>
    <property type="project" value="UniProtKB-SubCell"/>
</dbReference>
<dbReference type="GO" id="GO:0005840">
    <property type="term" value="C:ribosome"/>
    <property type="evidence" value="ECO:0007669"/>
    <property type="project" value="InterPro"/>
</dbReference>
<dbReference type="GO" id="GO:0043022">
    <property type="term" value="F:ribosome binding"/>
    <property type="evidence" value="ECO:0007669"/>
    <property type="project" value="InterPro"/>
</dbReference>
<dbReference type="GO" id="GO:0042274">
    <property type="term" value="P:ribosomal small subunit biogenesis"/>
    <property type="evidence" value="ECO:0007669"/>
    <property type="project" value="UniProtKB-UniRule"/>
</dbReference>
<dbReference type="GO" id="GO:0006364">
    <property type="term" value="P:rRNA processing"/>
    <property type="evidence" value="ECO:0007669"/>
    <property type="project" value="UniProtKB-UniRule"/>
</dbReference>
<dbReference type="Gene3D" id="2.30.30.240">
    <property type="entry name" value="PRC-barrel domain"/>
    <property type="match status" value="1"/>
</dbReference>
<dbReference type="Gene3D" id="2.40.30.60">
    <property type="entry name" value="RimM"/>
    <property type="match status" value="1"/>
</dbReference>
<dbReference type="HAMAP" id="MF_00014">
    <property type="entry name" value="Ribosome_mat_RimM"/>
    <property type="match status" value="1"/>
</dbReference>
<dbReference type="InterPro" id="IPR027275">
    <property type="entry name" value="PRC-brl_dom"/>
</dbReference>
<dbReference type="InterPro" id="IPR011033">
    <property type="entry name" value="PRC_barrel-like_sf"/>
</dbReference>
<dbReference type="InterPro" id="IPR011961">
    <property type="entry name" value="RimM"/>
</dbReference>
<dbReference type="InterPro" id="IPR002676">
    <property type="entry name" value="RimM_N"/>
</dbReference>
<dbReference type="InterPro" id="IPR036976">
    <property type="entry name" value="RimM_N_sf"/>
</dbReference>
<dbReference type="InterPro" id="IPR009000">
    <property type="entry name" value="Transl_B-barrel_sf"/>
</dbReference>
<dbReference type="NCBIfam" id="TIGR02273">
    <property type="entry name" value="16S_RimM"/>
    <property type="match status" value="1"/>
</dbReference>
<dbReference type="PANTHER" id="PTHR33692">
    <property type="entry name" value="RIBOSOME MATURATION FACTOR RIMM"/>
    <property type="match status" value="1"/>
</dbReference>
<dbReference type="PANTHER" id="PTHR33692:SF1">
    <property type="entry name" value="RIBOSOME MATURATION FACTOR RIMM"/>
    <property type="match status" value="1"/>
</dbReference>
<dbReference type="Pfam" id="PF05239">
    <property type="entry name" value="PRC"/>
    <property type="match status" value="1"/>
</dbReference>
<dbReference type="Pfam" id="PF01782">
    <property type="entry name" value="RimM"/>
    <property type="match status" value="1"/>
</dbReference>
<dbReference type="SUPFAM" id="SSF50346">
    <property type="entry name" value="PRC-barrel domain"/>
    <property type="match status" value="1"/>
</dbReference>
<dbReference type="SUPFAM" id="SSF50447">
    <property type="entry name" value="Translation proteins"/>
    <property type="match status" value="1"/>
</dbReference>
<comment type="function">
    <text evidence="1">An accessory protein needed during the final step in the assembly of 30S ribosomal subunit, possibly for assembly of the head region. Essential for efficient processing of 16S rRNA. May be needed both before and after RbfA during the maturation of 16S rRNA. It has affinity for free ribosomal 30S subunits but not for 70S ribosomes.</text>
</comment>
<comment type="subunit">
    <text evidence="1">Binds ribosomal protein uS19.</text>
</comment>
<comment type="subcellular location">
    <subcellularLocation>
        <location evidence="1">Cytoplasm</location>
    </subcellularLocation>
</comment>
<comment type="domain">
    <text evidence="1">The PRC barrel domain binds ribosomal protein uS19.</text>
</comment>
<comment type="similarity">
    <text evidence="1">Belongs to the RimM family.</text>
</comment>